<gene>
    <name type="primary">MT-CYB</name>
    <name type="synonym">COB</name>
    <name type="synonym">CYTB</name>
    <name type="synonym">MTCYB</name>
</gene>
<geneLocation type="mitochondrion"/>
<reference key="1">
    <citation type="journal article" date="2001" name="Mol. Phylogenet. Evol.">
        <title>Molecular systematics of bats of the genus Myotis (Vespertilionidae) suggests deterministic ecomorphological convergences.</title>
        <authorList>
            <person name="Ruedi M."/>
            <person name="Mayer F."/>
        </authorList>
    </citation>
    <scope>NUCLEOTIDE SEQUENCE [GENOMIC DNA]</scope>
    <source>
        <strain>Isolate IZEA 5049</strain>
    </source>
</reference>
<name>CYB_MYODY</name>
<evidence type="ECO:0000250" key="1"/>
<evidence type="ECO:0000250" key="2">
    <source>
        <dbReference type="UniProtKB" id="P00157"/>
    </source>
</evidence>
<evidence type="ECO:0000255" key="3">
    <source>
        <dbReference type="PROSITE-ProRule" id="PRU00967"/>
    </source>
</evidence>
<evidence type="ECO:0000255" key="4">
    <source>
        <dbReference type="PROSITE-ProRule" id="PRU00968"/>
    </source>
</evidence>
<dbReference type="EMBL" id="AF376846">
    <property type="protein sequence ID" value="AAK57665.1"/>
    <property type="molecule type" value="Genomic_DNA"/>
</dbReference>
<dbReference type="SMR" id="Q957B6"/>
<dbReference type="GO" id="GO:0005743">
    <property type="term" value="C:mitochondrial inner membrane"/>
    <property type="evidence" value="ECO:0007669"/>
    <property type="project" value="UniProtKB-SubCell"/>
</dbReference>
<dbReference type="GO" id="GO:0045275">
    <property type="term" value="C:respiratory chain complex III"/>
    <property type="evidence" value="ECO:0007669"/>
    <property type="project" value="InterPro"/>
</dbReference>
<dbReference type="GO" id="GO:0046872">
    <property type="term" value="F:metal ion binding"/>
    <property type="evidence" value="ECO:0007669"/>
    <property type="project" value="UniProtKB-KW"/>
</dbReference>
<dbReference type="GO" id="GO:0008121">
    <property type="term" value="F:ubiquinol-cytochrome-c reductase activity"/>
    <property type="evidence" value="ECO:0007669"/>
    <property type="project" value="InterPro"/>
</dbReference>
<dbReference type="GO" id="GO:0006122">
    <property type="term" value="P:mitochondrial electron transport, ubiquinol to cytochrome c"/>
    <property type="evidence" value="ECO:0007669"/>
    <property type="project" value="TreeGrafter"/>
</dbReference>
<dbReference type="CDD" id="cd00290">
    <property type="entry name" value="cytochrome_b_C"/>
    <property type="match status" value="1"/>
</dbReference>
<dbReference type="CDD" id="cd00284">
    <property type="entry name" value="Cytochrome_b_N"/>
    <property type="match status" value="1"/>
</dbReference>
<dbReference type="FunFam" id="1.20.810.10:FF:000002">
    <property type="entry name" value="Cytochrome b"/>
    <property type="match status" value="1"/>
</dbReference>
<dbReference type="Gene3D" id="1.20.810.10">
    <property type="entry name" value="Cytochrome Bc1 Complex, Chain C"/>
    <property type="match status" value="1"/>
</dbReference>
<dbReference type="InterPro" id="IPR005798">
    <property type="entry name" value="Cyt_b/b6_C"/>
</dbReference>
<dbReference type="InterPro" id="IPR036150">
    <property type="entry name" value="Cyt_b/b6_C_sf"/>
</dbReference>
<dbReference type="InterPro" id="IPR005797">
    <property type="entry name" value="Cyt_b/b6_N"/>
</dbReference>
<dbReference type="InterPro" id="IPR027387">
    <property type="entry name" value="Cytb/b6-like_sf"/>
</dbReference>
<dbReference type="InterPro" id="IPR030689">
    <property type="entry name" value="Cytochrome_b"/>
</dbReference>
<dbReference type="InterPro" id="IPR048260">
    <property type="entry name" value="Cytochrome_b_C_euk/bac"/>
</dbReference>
<dbReference type="InterPro" id="IPR048259">
    <property type="entry name" value="Cytochrome_b_N_euk/bac"/>
</dbReference>
<dbReference type="InterPro" id="IPR016174">
    <property type="entry name" value="Di-haem_cyt_TM"/>
</dbReference>
<dbReference type="PANTHER" id="PTHR19271">
    <property type="entry name" value="CYTOCHROME B"/>
    <property type="match status" value="1"/>
</dbReference>
<dbReference type="PANTHER" id="PTHR19271:SF16">
    <property type="entry name" value="CYTOCHROME B"/>
    <property type="match status" value="1"/>
</dbReference>
<dbReference type="Pfam" id="PF00032">
    <property type="entry name" value="Cytochrom_B_C"/>
    <property type="match status" value="1"/>
</dbReference>
<dbReference type="Pfam" id="PF00033">
    <property type="entry name" value="Cytochrome_B"/>
    <property type="match status" value="1"/>
</dbReference>
<dbReference type="PIRSF" id="PIRSF038885">
    <property type="entry name" value="COB"/>
    <property type="match status" value="1"/>
</dbReference>
<dbReference type="SUPFAM" id="SSF81648">
    <property type="entry name" value="a domain/subunit of cytochrome bc1 complex (Ubiquinol-cytochrome c reductase)"/>
    <property type="match status" value="1"/>
</dbReference>
<dbReference type="SUPFAM" id="SSF81342">
    <property type="entry name" value="Transmembrane di-heme cytochromes"/>
    <property type="match status" value="1"/>
</dbReference>
<dbReference type="PROSITE" id="PS51003">
    <property type="entry name" value="CYTB_CTER"/>
    <property type="match status" value="1"/>
</dbReference>
<dbReference type="PROSITE" id="PS51002">
    <property type="entry name" value="CYTB_NTER"/>
    <property type="match status" value="1"/>
</dbReference>
<proteinExistence type="inferred from homology"/>
<organism>
    <name type="scientific">Myotis dasycneme</name>
    <name type="common">Dutch pond bat</name>
    <name type="synonym">Vespertilio dasycneme</name>
    <dbReference type="NCBI Taxonomy" id="159324"/>
    <lineage>
        <taxon>Eukaryota</taxon>
        <taxon>Metazoa</taxon>
        <taxon>Chordata</taxon>
        <taxon>Craniata</taxon>
        <taxon>Vertebrata</taxon>
        <taxon>Euteleostomi</taxon>
        <taxon>Mammalia</taxon>
        <taxon>Eutheria</taxon>
        <taxon>Laurasiatheria</taxon>
        <taxon>Chiroptera</taxon>
        <taxon>Yangochiroptera</taxon>
        <taxon>Vespertilionidae</taxon>
        <taxon>Myotis</taxon>
    </lineage>
</organism>
<comment type="function">
    <text evidence="2">Component of the ubiquinol-cytochrome c reductase complex (complex III or cytochrome b-c1 complex) that is part of the mitochondrial respiratory chain. The b-c1 complex mediates electron transfer from ubiquinol to cytochrome c. Contributes to the generation of a proton gradient across the mitochondrial membrane that is then used for ATP synthesis.</text>
</comment>
<comment type="cofactor">
    <cofactor evidence="2">
        <name>heme b</name>
        <dbReference type="ChEBI" id="CHEBI:60344"/>
    </cofactor>
    <text evidence="2">Binds 2 heme b groups non-covalently.</text>
</comment>
<comment type="subunit">
    <text evidence="2">The cytochrome bc1 complex contains 11 subunits: 3 respiratory subunits (MT-CYB, CYC1 and UQCRFS1), 2 core proteins (UQCRC1 and UQCRC2) and 6 low-molecular weight proteins (UQCRH/QCR6, UQCRB/QCR7, UQCRQ/QCR8, UQCR10/QCR9, UQCR11/QCR10 and a cleavage product of UQCRFS1). This cytochrome bc1 complex then forms a dimer.</text>
</comment>
<comment type="subcellular location">
    <subcellularLocation>
        <location evidence="2">Mitochondrion inner membrane</location>
        <topology evidence="2">Multi-pass membrane protein</topology>
    </subcellularLocation>
</comment>
<comment type="miscellaneous">
    <text evidence="1">Heme 1 (or BL or b562) is low-potential and absorbs at about 562 nm, and heme 2 (or BH or b566) is high-potential and absorbs at about 566 nm.</text>
</comment>
<comment type="similarity">
    <text evidence="3 4">Belongs to the cytochrome b family.</text>
</comment>
<comment type="caution">
    <text evidence="2">The full-length protein contains only eight transmembrane helices, not nine as predicted by bioinformatics tools.</text>
</comment>
<feature type="chain" id="PRO_0000254721" description="Cytochrome b">
    <location>
        <begin position="1"/>
        <end position="379"/>
    </location>
</feature>
<feature type="transmembrane region" description="Helical" evidence="2">
    <location>
        <begin position="33"/>
        <end position="53"/>
    </location>
</feature>
<feature type="transmembrane region" description="Helical" evidence="2">
    <location>
        <begin position="77"/>
        <end position="98"/>
    </location>
</feature>
<feature type="transmembrane region" description="Helical" evidence="2">
    <location>
        <begin position="113"/>
        <end position="133"/>
    </location>
</feature>
<feature type="transmembrane region" description="Helical" evidence="2">
    <location>
        <begin position="178"/>
        <end position="198"/>
    </location>
</feature>
<feature type="transmembrane region" description="Helical" evidence="2">
    <location>
        <begin position="226"/>
        <end position="246"/>
    </location>
</feature>
<feature type="transmembrane region" description="Helical" evidence="2">
    <location>
        <begin position="288"/>
        <end position="308"/>
    </location>
</feature>
<feature type="transmembrane region" description="Helical" evidence="2">
    <location>
        <begin position="320"/>
        <end position="340"/>
    </location>
</feature>
<feature type="transmembrane region" description="Helical" evidence="2">
    <location>
        <begin position="347"/>
        <end position="367"/>
    </location>
</feature>
<feature type="binding site" description="axial binding residue" evidence="2">
    <location>
        <position position="83"/>
    </location>
    <ligand>
        <name>heme b</name>
        <dbReference type="ChEBI" id="CHEBI:60344"/>
        <label>b562</label>
    </ligand>
    <ligandPart>
        <name>Fe</name>
        <dbReference type="ChEBI" id="CHEBI:18248"/>
    </ligandPart>
</feature>
<feature type="binding site" description="axial binding residue" evidence="2">
    <location>
        <position position="97"/>
    </location>
    <ligand>
        <name>heme b</name>
        <dbReference type="ChEBI" id="CHEBI:60344"/>
        <label>b566</label>
    </ligand>
    <ligandPart>
        <name>Fe</name>
        <dbReference type="ChEBI" id="CHEBI:18248"/>
    </ligandPart>
</feature>
<feature type="binding site" description="axial binding residue" evidence="2">
    <location>
        <position position="182"/>
    </location>
    <ligand>
        <name>heme b</name>
        <dbReference type="ChEBI" id="CHEBI:60344"/>
        <label>b562</label>
    </ligand>
    <ligandPart>
        <name>Fe</name>
        <dbReference type="ChEBI" id="CHEBI:18248"/>
    </ligandPart>
</feature>
<feature type="binding site" description="axial binding residue" evidence="2">
    <location>
        <position position="196"/>
    </location>
    <ligand>
        <name>heme b</name>
        <dbReference type="ChEBI" id="CHEBI:60344"/>
        <label>b566</label>
    </ligand>
    <ligandPart>
        <name>Fe</name>
        <dbReference type="ChEBI" id="CHEBI:18248"/>
    </ligandPart>
</feature>
<feature type="binding site" evidence="2">
    <location>
        <position position="201"/>
    </location>
    <ligand>
        <name>a ubiquinone</name>
        <dbReference type="ChEBI" id="CHEBI:16389"/>
    </ligand>
</feature>
<keyword id="KW-0249">Electron transport</keyword>
<keyword id="KW-0349">Heme</keyword>
<keyword id="KW-0408">Iron</keyword>
<keyword id="KW-0472">Membrane</keyword>
<keyword id="KW-0479">Metal-binding</keyword>
<keyword id="KW-0496">Mitochondrion</keyword>
<keyword id="KW-0999">Mitochondrion inner membrane</keyword>
<keyword id="KW-0679">Respiratory chain</keyword>
<keyword id="KW-0812">Transmembrane</keyword>
<keyword id="KW-1133">Transmembrane helix</keyword>
<keyword id="KW-0813">Transport</keyword>
<keyword id="KW-0830">Ubiquinone</keyword>
<protein>
    <recommendedName>
        <fullName>Cytochrome b</fullName>
    </recommendedName>
    <alternativeName>
        <fullName>Complex III subunit 3</fullName>
    </alternativeName>
    <alternativeName>
        <fullName>Complex III subunit III</fullName>
    </alternativeName>
    <alternativeName>
        <fullName>Cytochrome b-c1 complex subunit 3</fullName>
    </alternativeName>
    <alternativeName>
        <fullName>Ubiquinol-cytochrome-c reductase complex cytochrome b subunit</fullName>
    </alternativeName>
</protein>
<sequence>MTNIRKSHPLAKIINSSFIDLPAPSNISSWWNFGSLLGICLALQILTGLFLAMHYTSDTATAFNSVTHICRDVNYGWILRYLHANGASMFFICLYLHVGRGLYYGSYMYTETWNIGIILLFAVMATAFMGYVLPWGQMSFWGATVITNLLSAIPYIGTNLVEWIWGGFSVDKATLTRFFAFHFLLPFIISAMVMVHLLFLHETGSNNPTGIPSNIDMIPFHPYYTTKDILGLLLMIMFLLMLVLFSPDLLGDPDNYMPANPLNTPPHIKPEWYFLFAYAILRSIPNKLGGVLALVLSILILTIIPLLHTSKQRSMAFRPLSQCLFWLLVADLLTLTWIGGQPVEHPYVVIGQLASILYFSIIIILMPLTSLMENHLLKW</sequence>
<accession>Q957B6</accession>